<sequence length="77" mass="8653">MQIFVKTLTGKTITLEVESSDTIDNVKAKIQDKEGIPPDQQRLIFAGKQLEDGRTLADYNIQKESTLHLVLRLRGGQ</sequence>
<evidence type="ECO:0000250" key="1"/>
<evidence type="ECO:0000255" key="2">
    <source>
        <dbReference type="PROSITE-ProRule" id="PRU00214"/>
    </source>
</evidence>
<evidence type="ECO:0000305" key="3"/>
<evidence type="ECO:0007744" key="4">
    <source>
        <dbReference type="PDB" id="7SOL"/>
    </source>
</evidence>
<evidence type="ECO:0007829" key="5">
    <source>
        <dbReference type="PDB" id="6NYA"/>
    </source>
</evidence>
<evidence type="ECO:0007829" key="6">
    <source>
        <dbReference type="PDB" id="7K5J"/>
    </source>
</evidence>
<evidence type="ECO:0007829" key="7">
    <source>
        <dbReference type="PDB" id="7SOL"/>
    </source>
</evidence>
<comment type="function">
    <text evidence="1">Ubiquitin exists either covalently attached to another protein, or free (unanchored). When covalently bound, it is conjugated to target proteins via an isopeptide bond either as a monomer (monoubiquitin), a polymer linked via different Lys residues of the ubiquitin (polyubiquitin chains) or a linear polymer linked via the initiator Met of the ubiquitin (linear polyubiquitin chains). Polyubiquitin chains, when attached to a target protein, have different functions depending on the Lys residue of the ubiquitin that is linked: Lys-48-linked is involved in protein degradation via the proteasome. Linear polymer chains formed via attachment by the initiator Met lead to cell signaling. Ubiquitin is usually conjugated to Lys residues of target proteins, however, in rare cases, conjugation to Cys or Ser residues has been observed. When polyubiquitin is free (unanchored-polyubiquitin), it also has distinct roles, such as in activation of protein kinases, and in signaling (By similarity).</text>
</comment>
<comment type="subcellular location">
    <subcellularLocation>
        <location evidence="1">Cytoplasm</location>
    </subcellularLocation>
    <subcellularLocation>
        <location evidence="1">Nucleus</location>
    </subcellularLocation>
</comment>
<comment type="similarity">
    <text evidence="3">Belongs to the ubiquitin family.</text>
</comment>
<proteinExistence type="evidence at protein level"/>
<protein>
    <recommendedName>
        <fullName>Ubiquitin</fullName>
    </recommendedName>
</protein>
<organism>
    <name type="scientific">Triticum aestivum</name>
    <name type="common">Wheat</name>
    <dbReference type="NCBI Taxonomy" id="4565"/>
    <lineage>
        <taxon>Eukaryota</taxon>
        <taxon>Viridiplantae</taxon>
        <taxon>Streptophyta</taxon>
        <taxon>Embryophyta</taxon>
        <taxon>Tracheophyta</taxon>
        <taxon>Spermatophyta</taxon>
        <taxon>Magnoliopsida</taxon>
        <taxon>Liliopsida</taxon>
        <taxon>Poales</taxon>
        <taxon>Poaceae</taxon>
        <taxon>BOP clade</taxon>
        <taxon>Pooideae</taxon>
        <taxon>Triticodae</taxon>
        <taxon>Triticeae</taxon>
        <taxon>Triticinae</taxon>
        <taxon>Triticum</taxon>
    </lineage>
</organism>
<keyword id="KW-0002">3D-structure</keyword>
<keyword id="KW-0963">Cytoplasm</keyword>
<keyword id="KW-1017">Isopeptide bond</keyword>
<keyword id="KW-0539">Nucleus</keyword>
<keyword id="KW-1185">Reference proteome</keyword>
<keyword id="KW-0832">Ubl conjugation</keyword>
<dbReference type="EMBL" id="X56601">
    <property type="protein sequence ID" value="CAA39938.1"/>
    <property type="molecule type" value="mRNA"/>
</dbReference>
<dbReference type="PDB" id="5TTE">
    <property type="method" value="X-ray"/>
    <property type="resolution" value="3.50 A"/>
    <property type="chains" value="F=1-76"/>
</dbReference>
<dbReference type="PDB" id="6NYA">
    <property type="method" value="X-ray"/>
    <property type="resolution" value="2.06 A"/>
    <property type="chains" value="B/E=1-76"/>
</dbReference>
<dbReference type="PDB" id="7K5J">
    <property type="method" value="X-ray"/>
    <property type="resolution" value="3.42 A"/>
    <property type="chains" value="M/N/O/P/Q/R/W/X=1-76"/>
</dbReference>
<dbReference type="PDB" id="7SOL">
    <property type="method" value="X-ray"/>
    <property type="resolution" value="2.25 A"/>
    <property type="chains" value="B/D=1-76"/>
</dbReference>
<dbReference type="PDBsum" id="5TTE"/>
<dbReference type="PDBsum" id="6NYA"/>
<dbReference type="PDBsum" id="7K5J"/>
<dbReference type="PDBsum" id="7SOL"/>
<dbReference type="SMR" id="P69326"/>
<dbReference type="STRING" id="4565.P69326"/>
<dbReference type="PaxDb" id="4565-Traes_1AS_36865F81C.2"/>
<dbReference type="EnsemblPlants" id="TraesARI7D03G04536660.1">
    <property type="protein sequence ID" value="TraesARI7D03G04536660.1.CDS1"/>
    <property type="gene ID" value="TraesARI7D03G04536660"/>
</dbReference>
<dbReference type="EnsemblPlants" id="TraesCAD_scaffold_050574_01G000200.1">
    <property type="protein sequence ID" value="TraesCAD_scaffold_050574_01G000200.1"/>
    <property type="gene ID" value="TraesCAD_scaffold_050574_01G000200"/>
</dbReference>
<dbReference type="EnsemblPlants" id="TraesCLE_scaffold_060412_01G000200.1">
    <property type="protein sequence ID" value="TraesCLE_scaffold_060412_01G000200.1"/>
    <property type="gene ID" value="TraesCLE_scaffold_060412_01G000200"/>
</dbReference>
<dbReference type="EnsemblPlants" id="TraesCS7D02G454100.1">
    <property type="protein sequence ID" value="TraesCS7D02G454100.1.cds1"/>
    <property type="gene ID" value="TraesCS7D02G454100"/>
</dbReference>
<dbReference type="EnsemblPlants" id="TraesCS7D03G1078600.1">
    <property type="protein sequence ID" value="TraesCS7D03G1078600.1.CDS1"/>
    <property type="gene ID" value="TraesCS7D03G1078600"/>
</dbReference>
<dbReference type="EnsemblPlants" id="TraesJAG6A03G03259480.1">
    <property type="protein sequence ID" value="TraesJAG6A03G03259480.1.CDS1"/>
    <property type="gene ID" value="TraesJAG6A03G03259480"/>
</dbReference>
<dbReference type="EnsemblPlants" id="TraesJAG6B03G03477610.1">
    <property type="protein sequence ID" value="TraesJAG6B03G03477610.1"/>
    <property type="gene ID" value="TraesJAG6B03G03477610"/>
</dbReference>
<dbReference type="EnsemblPlants" id="TraesJAG6D03G03668340.1">
    <property type="protein sequence ID" value="TraesJAG6D03G03668340.1.CDS1"/>
    <property type="gene ID" value="TraesJAG6D03G03668340"/>
</dbReference>
<dbReference type="EnsemblPlants" id="TraesJAG7A03G03976390.1">
    <property type="protein sequence ID" value="TraesJAG7A03G03976390.1.CDS1"/>
    <property type="gene ID" value="TraesJAG7A03G03976390"/>
</dbReference>
<dbReference type="EnsemblPlants" id="TraesJAG7B03G04207060.1">
    <property type="protein sequence ID" value="TraesJAG7B03G04207060.1.CDS1"/>
    <property type="gene ID" value="TraesJAG7B03G04207060"/>
</dbReference>
<dbReference type="EnsemblPlants" id="TraesJAG7D03G04438520.1">
    <property type="protein sequence ID" value="TraesJAG7D03G04438520.1.CDS1"/>
    <property type="gene ID" value="TraesJAG7D03G04438520"/>
</dbReference>
<dbReference type="EnsemblPlants" id="TraesJAG7D03G04442930.1">
    <property type="protein sequence ID" value="TraesJAG7D03G04442930.1.CDS1"/>
    <property type="gene ID" value="TraesJAG7D03G04442930"/>
</dbReference>
<dbReference type="EnsemblPlants" id="TraesJAG7D03G04443390.1">
    <property type="protein sequence ID" value="TraesJAG7D03G04443390.1.CDS1"/>
    <property type="gene ID" value="TraesJAG7D03G04443390"/>
</dbReference>
<dbReference type="EnsemblPlants" id="TraesJAGUn03G04543240.1">
    <property type="protein sequence ID" value="TraesJAGUn03G04543240.1.CDS1"/>
    <property type="gene ID" value="TraesJAGUn03G04543240"/>
</dbReference>
<dbReference type="EnsemblPlants" id="TraesJUL6B03G03515340.1">
    <property type="protein sequence ID" value="TraesJUL6B03G03515340.1.CDS1"/>
    <property type="gene ID" value="TraesJUL6B03G03515340"/>
</dbReference>
<dbReference type="EnsemblPlants" id="TraesJUL7D03G04504410.1">
    <property type="protein sequence ID" value="TraesJUL7D03G04504410.1.CDS1"/>
    <property type="gene ID" value="TraesJUL7D03G04504410"/>
</dbReference>
<dbReference type="EnsemblPlants" id="TraesJULUn03G04556480.1">
    <property type="protein sequence ID" value="TraesJULUn03G04556480.1.CDS1"/>
    <property type="gene ID" value="TraesJULUn03G04556480"/>
</dbReference>
<dbReference type="EnsemblPlants" id="TraesKAR2D01G0375900.1">
    <property type="protein sequence ID" value="cds.TraesKAR2D01G0375900.1"/>
    <property type="gene ID" value="TraesKAR2D01G0375900"/>
</dbReference>
<dbReference type="EnsemblPlants" id="TraesKAR7A01G0412120.1">
    <property type="protein sequence ID" value="cds.TraesKAR7A01G0412120.1"/>
    <property type="gene ID" value="TraesKAR7A01G0412120"/>
</dbReference>
<dbReference type="EnsemblPlants" id="TraesKAR7D01G0414320.1">
    <property type="protein sequence ID" value="cds.TraesKAR7D01G0414320.1"/>
    <property type="gene ID" value="TraesKAR7D01G0414320"/>
</dbReference>
<dbReference type="EnsemblPlants" id="TraesLAC7B03G04169880.1">
    <property type="protein sequence ID" value="TraesLAC7B03G04169880.1.CDS1"/>
    <property type="gene ID" value="TraesLAC7B03G04169880"/>
</dbReference>
<dbReference type="EnsemblPlants" id="TraesLAC7D03G04402500.1">
    <property type="protein sequence ID" value="TraesLAC7D03G04402500.1.CDS1"/>
    <property type="gene ID" value="TraesLAC7D03G04402500"/>
</dbReference>
<dbReference type="EnsemblPlants" id="TraesLAC7D03G04407090.1">
    <property type="protein sequence ID" value="TraesLAC7D03G04407090.1.CDS1"/>
    <property type="gene ID" value="TraesLAC7D03G04407090"/>
</dbReference>
<dbReference type="EnsemblPlants" id="TraesLAC7D03G04407520.1">
    <property type="protein sequence ID" value="TraesLAC7D03G04407520.1.CDS1"/>
    <property type="gene ID" value="TraesLAC7D03G04407520"/>
</dbReference>
<dbReference type="EnsemblPlants" id="TraesLDM6D03G03688680.1">
    <property type="protein sequence ID" value="TraesLDM6D03G03688680.1.CDS1"/>
    <property type="gene ID" value="TraesLDM6D03G03688680"/>
</dbReference>
<dbReference type="EnsemblPlants" id="TraesLDM7B03G04228000.1">
    <property type="protein sequence ID" value="TraesLDM7B03G04228000.1.CDS1"/>
    <property type="gene ID" value="TraesLDM7B03G04228000"/>
</dbReference>
<dbReference type="EnsemblPlants" id="TraesLDM7D03G04462060.1">
    <property type="protein sequence ID" value="TraesLDM7D03G04462060.1.CDS1"/>
    <property type="gene ID" value="TraesLDM7D03G04462060"/>
</dbReference>
<dbReference type="EnsemblPlants" id="TraesMAC6A03G03263220.1">
    <property type="protein sequence ID" value="TraesMAC6A03G03263220.1.CDS1"/>
    <property type="gene ID" value="TraesMAC6A03G03263220"/>
</dbReference>
<dbReference type="EnsemblPlants" id="TraesMAC7B03G04218530.1">
    <property type="protein sequence ID" value="TraesMAC7B03G04218530.1.CDS1"/>
    <property type="gene ID" value="TraesMAC7B03G04218530"/>
</dbReference>
<dbReference type="EnsemblPlants" id="TraesMAC7D03G04447720.1">
    <property type="protein sequence ID" value="TraesMAC7D03G04447720.1.CDS1"/>
    <property type="gene ID" value="TraesMAC7D03G04447720"/>
</dbReference>
<dbReference type="EnsemblPlants" id="TraesMAC7D03G04452360.1">
    <property type="protein sequence ID" value="TraesMAC7D03G04452360.1.CDS1"/>
    <property type="gene ID" value="TraesMAC7D03G04452360"/>
</dbReference>
<dbReference type="EnsemblPlants" id="TraesMAC7D03G04452820.1">
    <property type="protein sequence ID" value="TraesMAC7D03G04452820.1.CDS1"/>
    <property type="gene ID" value="TraesMAC7D03G04452820"/>
</dbReference>
<dbReference type="EnsemblPlants" id="TraesNOR2A03G00769100.1">
    <property type="protein sequence ID" value="TraesNOR2A03G00769100.1"/>
    <property type="gene ID" value="TraesNOR2A03G00769100"/>
</dbReference>
<dbReference type="EnsemblPlants" id="TraesNOR5B03G02848730.1">
    <property type="protein sequence ID" value="TraesNOR5B03G02848730.1.CDS1"/>
    <property type="gene ID" value="TraesNOR5B03G02848730"/>
</dbReference>
<dbReference type="EnsemblPlants" id="TraesNOR6A03G03314890.1">
    <property type="protein sequence ID" value="TraesNOR6A03G03314890.1.CDS1"/>
    <property type="gene ID" value="TraesNOR6A03G03314890"/>
</dbReference>
<dbReference type="EnsemblPlants" id="TraesNOR6D03G03725440.1">
    <property type="protein sequence ID" value="TraesNOR6D03G03725440.1.CDS1"/>
    <property type="gene ID" value="TraesNOR6D03G03725440"/>
</dbReference>
<dbReference type="EnsemblPlants" id="TraesNOR7B03G04272090.1">
    <property type="protein sequence ID" value="TraesNOR7B03G04272090.1.CDS1"/>
    <property type="gene ID" value="TraesNOR7B03G04272090"/>
</dbReference>
<dbReference type="EnsemblPlants" id="TraesNOR7D03G04509050.1">
    <property type="protein sequence ID" value="TraesNOR7D03G04509050.1.CDS1"/>
    <property type="gene ID" value="TraesNOR7D03G04509050"/>
</dbReference>
<dbReference type="EnsemblPlants" id="TraesNOR7D03G04509530.1">
    <property type="protein sequence ID" value="TraesNOR7D03G04509530.1.CDS1"/>
    <property type="gene ID" value="TraesNOR7D03G04509530"/>
</dbReference>
<dbReference type="EnsemblPlants" id="TraesROB_scaffold_086305_01G000200.1">
    <property type="protein sequence ID" value="TraesROB_scaffold_086305_01G000200.1"/>
    <property type="gene ID" value="TraesROB_scaffold_086305_01G000200"/>
</dbReference>
<dbReference type="EnsemblPlants" id="TraesROB_scaffold_183018_01G000300.1">
    <property type="protein sequence ID" value="TraesROB_scaffold_183018_01G000300.1"/>
    <property type="gene ID" value="TraesROB_scaffold_183018_01G000300"/>
</dbReference>
<dbReference type="EnsemblPlants" id="TraesSTA7D03G04454250.1">
    <property type="protein sequence ID" value="TraesSTA7D03G04454250.1.CDS1"/>
    <property type="gene ID" value="TraesSTA7D03G04454250"/>
</dbReference>
<dbReference type="EnsemblPlants" id="TraesSTA7D03G04454720.1">
    <property type="protein sequence ID" value="TraesSTA7D03G04454720.1.CDS1"/>
    <property type="gene ID" value="TraesSTA7D03G04454720"/>
</dbReference>
<dbReference type="EnsemblPlants" id="TraesSYM6A03G03224100.1">
    <property type="protein sequence ID" value="TraesSYM6A03G03224100.1.CDS1"/>
    <property type="gene ID" value="TraesSYM6A03G03224100"/>
</dbReference>
<dbReference type="EnsemblPlants" id="TraesSYM7D03G04509730.1">
    <property type="protein sequence ID" value="TraesSYM7D03G04509730.1.CDS1"/>
    <property type="gene ID" value="TraesSYM7D03G04509730"/>
</dbReference>
<dbReference type="EnsemblPlants" id="TraesSYM7D03G04514440.1">
    <property type="protein sequence ID" value="TraesSYM7D03G04514440.1.CDS1"/>
    <property type="gene ID" value="TraesSYM7D03G04514440"/>
</dbReference>
<dbReference type="EnsemblPlants" id="TraesSYM7D03G04514900.1">
    <property type="protein sequence ID" value="TraesSYM7D03G04514900.1.CDS1"/>
    <property type="gene ID" value="TraesSYM7D03G04514900"/>
</dbReference>
<dbReference type="EnsemblPlants" id="TraesWEE_scaffold_049341_01G000300.1">
    <property type="protein sequence ID" value="TraesWEE_scaffold_049341_01G000300.1"/>
    <property type="gene ID" value="TraesWEE_scaffold_049341_01G000300"/>
</dbReference>
<dbReference type="Gramene" id="TraesARI7D03G04536660.1">
    <property type="protein sequence ID" value="TraesARI7D03G04536660.1.CDS1"/>
    <property type="gene ID" value="TraesARI7D03G04536660"/>
</dbReference>
<dbReference type="Gramene" id="TraesCAD_scaffold_050574_01G000200.1">
    <property type="protein sequence ID" value="TraesCAD_scaffold_050574_01G000200.1"/>
    <property type="gene ID" value="TraesCAD_scaffold_050574_01G000200"/>
</dbReference>
<dbReference type="Gramene" id="TraesCLE_scaffold_060412_01G000200.1">
    <property type="protein sequence ID" value="TraesCLE_scaffold_060412_01G000200.1"/>
    <property type="gene ID" value="TraesCLE_scaffold_060412_01G000200"/>
</dbReference>
<dbReference type="Gramene" id="TraesCS7D02G454100.1">
    <property type="protein sequence ID" value="TraesCS7D02G454100.1.cds1"/>
    <property type="gene ID" value="TraesCS7D02G454100"/>
</dbReference>
<dbReference type="Gramene" id="TraesCS7D03G1078600.1">
    <property type="protein sequence ID" value="TraesCS7D03G1078600.1.CDS1"/>
    <property type="gene ID" value="TraesCS7D03G1078600"/>
</dbReference>
<dbReference type="Gramene" id="TraesJAG6A03G03259480.1">
    <property type="protein sequence ID" value="TraesJAG6A03G03259480.1.CDS1"/>
    <property type="gene ID" value="TraesJAG6A03G03259480"/>
</dbReference>
<dbReference type="Gramene" id="TraesJAG6B03G03477610.1">
    <property type="protein sequence ID" value="TraesJAG6B03G03477610.1"/>
    <property type="gene ID" value="TraesJAG6B03G03477610"/>
</dbReference>
<dbReference type="Gramene" id="TraesJAG6D03G03668340.1">
    <property type="protein sequence ID" value="TraesJAG6D03G03668340.1.CDS1"/>
    <property type="gene ID" value="TraesJAG6D03G03668340"/>
</dbReference>
<dbReference type="Gramene" id="TraesJAG7A03G03976390.1">
    <property type="protein sequence ID" value="TraesJAG7A03G03976390.1.CDS1"/>
    <property type="gene ID" value="TraesJAG7A03G03976390"/>
</dbReference>
<dbReference type="Gramene" id="TraesJAG7B03G04207060.1">
    <property type="protein sequence ID" value="TraesJAG7B03G04207060.1.CDS1"/>
    <property type="gene ID" value="TraesJAG7B03G04207060"/>
</dbReference>
<dbReference type="Gramene" id="TraesJAG7D03G04438520.1">
    <property type="protein sequence ID" value="TraesJAG7D03G04438520.1.CDS1"/>
    <property type="gene ID" value="TraesJAG7D03G04438520"/>
</dbReference>
<dbReference type="Gramene" id="TraesJAG7D03G04442930.1">
    <property type="protein sequence ID" value="TraesJAG7D03G04442930.1.CDS1"/>
    <property type="gene ID" value="TraesJAG7D03G04442930"/>
</dbReference>
<dbReference type="Gramene" id="TraesJAG7D03G04443390.1">
    <property type="protein sequence ID" value="TraesJAG7D03G04443390.1.CDS1"/>
    <property type="gene ID" value="TraesJAG7D03G04443390"/>
</dbReference>
<dbReference type="Gramene" id="TraesJAGUn03G04543240.1">
    <property type="protein sequence ID" value="TraesJAGUn03G04543240.1.CDS1"/>
    <property type="gene ID" value="TraesJAGUn03G04543240"/>
</dbReference>
<dbReference type="Gramene" id="TraesJUL6B03G03515340.1">
    <property type="protein sequence ID" value="TraesJUL6B03G03515340.1.CDS1"/>
    <property type="gene ID" value="TraesJUL6B03G03515340"/>
</dbReference>
<dbReference type="Gramene" id="TraesJUL7D03G04504410.1">
    <property type="protein sequence ID" value="TraesJUL7D03G04504410.1.CDS1"/>
    <property type="gene ID" value="TraesJUL7D03G04504410"/>
</dbReference>
<dbReference type="Gramene" id="TraesJULUn03G04556480.1">
    <property type="protein sequence ID" value="TraesJULUn03G04556480.1.CDS1"/>
    <property type="gene ID" value="TraesJULUn03G04556480"/>
</dbReference>
<dbReference type="Gramene" id="TraesKAR2D01G0375900.1">
    <property type="protein sequence ID" value="cds.TraesKAR2D01G0375900.1"/>
    <property type="gene ID" value="TraesKAR2D01G0375900"/>
</dbReference>
<dbReference type="Gramene" id="TraesKAR7A01G0412120.1">
    <property type="protein sequence ID" value="cds.TraesKAR7A01G0412120.1"/>
    <property type="gene ID" value="TraesKAR7A01G0412120"/>
</dbReference>
<dbReference type="Gramene" id="TraesKAR7D01G0414320.1">
    <property type="protein sequence ID" value="cds.TraesKAR7D01G0414320.1"/>
    <property type="gene ID" value="TraesKAR7D01G0414320"/>
</dbReference>
<dbReference type="Gramene" id="TraesLAC7B03G04169880.1">
    <property type="protein sequence ID" value="TraesLAC7B03G04169880.1.CDS1"/>
    <property type="gene ID" value="TraesLAC7B03G04169880"/>
</dbReference>
<dbReference type="Gramene" id="TraesLAC7D03G04402500.1">
    <property type="protein sequence ID" value="TraesLAC7D03G04402500.1.CDS1"/>
    <property type="gene ID" value="TraesLAC7D03G04402500"/>
</dbReference>
<dbReference type="Gramene" id="TraesLAC7D03G04407090.1">
    <property type="protein sequence ID" value="TraesLAC7D03G04407090.1.CDS1"/>
    <property type="gene ID" value="TraesLAC7D03G04407090"/>
</dbReference>
<dbReference type="Gramene" id="TraesLAC7D03G04407520.1">
    <property type="protein sequence ID" value="TraesLAC7D03G04407520.1.CDS1"/>
    <property type="gene ID" value="TraesLAC7D03G04407520"/>
</dbReference>
<dbReference type="Gramene" id="TraesLDM6D03G03688680.1">
    <property type="protein sequence ID" value="TraesLDM6D03G03688680.1.CDS1"/>
    <property type="gene ID" value="TraesLDM6D03G03688680"/>
</dbReference>
<dbReference type="Gramene" id="TraesLDM7B03G04228000.1">
    <property type="protein sequence ID" value="TraesLDM7B03G04228000.1.CDS1"/>
    <property type="gene ID" value="TraesLDM7B03G04228000"/>
</dbReference>
<dbReference type="Gramene" id="TraesLDM7D03G04462060.1">
    <property type="protein sequence ID" value="TraesLDM7D03G04462060.1.CDS1"/>
    <property type="gene ID" value="TraesLDM7D03G04462060"/>
</dbReference>
<dbReference type="Gramene" id="TraesMAC6A03G03263220.1">
    <property type="protein sequence ID" value="TraesMAC6A03G03263220.1.CDS1"/>
    <property type="gene ID" value="TraesMAC6A03G03263220"/>
</dbReference>
<dbReference type="Gramene" id="TraesMAC7B03G04218530.1">
    <property type="protein sequence ID" value="TraesMAC7B03G04218530.1.CDS1"/>
    <property type="gene ID" value="TraesMAC7B03G04218530"/>
</dbReference>
<dbReference type="Gramene" id="TraesMAC7D03G04447720.1">
    <property type="protein sequence ID" value="TraesMAC7D03G04447720.1.CDS1"/>
    <property type="gene ID" value="TraesMAC7D03G04447720"/>
</dbReference>
<dbReference type="Gramene" id="TraesMAC7D03G04452360.1">
    <property type="protein sequence ID" value="TraesMAC7D03G04452360.1.CDS1"/>
    <property type="gene ID" value="TraesMAC7D03G04452360"/>
</dbReference>
<dbReference type="Gramene" id="TraesMAC7D03G04452820.1">
    <property type="protein sequence ID" value="TraesMAC7D03G04452820.1.CDS1"/>
    <property type="gene ID" value="TraesMAC7D03G04452820"/>
</dbReference>
<dbReference type="Gramene" id="TraesNOR2A03G00769100.1">
    <property type="protein sequence ID" value="TraesNOR2A03G00769100.1"/>
    <property type="gene ID" value="TraesNOR2A03G00769100"/>
</dbReference>
<dbReference type="Gramene" id="TraesNOR5B03G02848730.1">
    <property type="protein sequence ID" value="TraesNOR5B03G02848730.1.CDS1"/>
    <property type="gene ID" value="TraesNOR5B03G02848730"/>
</dbReference>
<dbReference type="Gramene" id="TraesNOR6A03G03314890.1">
    <property type="protein sequence ID" value="TraesNOR6A03G03314890.1.CDS1"/>
    <property type="gene ID" value="TraesNOR6A03G03314890"/>
</dbReference>
<dbReference type="Gramene" id="TraesNOR6D03G03725440.1">
    <property type="protein sequence ID" value="TraesNOR6D03G03725440.1.CDS1"/>
    <property type="gene ID" value="TraesNOR6D03G03725440"/>
</dbReference>
<dbReference type="Gramene" id="TraesNOR7B03G04272090.1">
    <property type="protein sequence ID" value="TraesNOR7B03G04272090.1.CDS1"/>
    <property type="gene ID" value="TraesNOR7B03G04272090"/>
</dbReference>
<dbReference type="Gramene" id="TraesNOR7D03G04509050.1">
    <property type="protein sequence ID" value="TraesNOR7D03G04509050.1.CDS1"/>
    <property type="gene ID" value="TraesNOR7D03G04509050"/>
</dbReference>
<dbReference type="Gramene" id="TraesNOR7D03G04509530.1">
    <property type="protein sequence ID" value="TraesNOR7D03G04509530.1.CDS1"/>
    <property type="gene ID" value="TraesNOR7D03G04509530"/>
</dbReference>
<dbReference type="Gramene" id="TraesROB_scaffold_086305_01G000200.1">
    <property type="protein sequence ID" value="TraesROB_scaffold_086305_01G000200.1"/>
    <property type="gene ID" value="TraesROB_scaffold_086305_01G000200"/>
</dbReference>
<dbReference type="Gramene" id="TraesROB_scaffold_183018_01G000300.1">
    <property type="protein sequence ID" value="TraesROB_scaffold_183018_01G000300.1"/>
    <property type="gene ID" value="TraesROB_scaffold_183018_01G000300"/>
</dbReference>
<dbReference type="Gramene" id="TraesSTA7D03G04454250.1">
    <property type="protein sequence ID" value="TraesSTA7D03G04454250.1.CDS1"/>
    <property type="gene ID" value="TraesSTA7D03G04454250"/>
</dbReference>
<dbReference type="Gramene" id="TraesSTA7D03G04454720.1">
    <property type="protein sequence ID" value="TraesSTA7D03G04454720.1.CDS1"/>
    <property type="gene ID" value="TraesSTA7D03G04454720"/>
</dbReference>
<dbReference type="Gramene" id="TraesSYM6A03G03224100.1">
    <property type="protein sequence ID" value="TraesSYM6A03G03224100.1.CDS1"/>
    <property type="gene ID" value="TraesSYM6A03G03224100"/>
</dbReference>
<dbReference type="Gramene" id="TraesSYM7D03G04509730.1">
    <property type="protein sequence ID" value="TraesSYM7D03G04509730.1.CDS1"/>
    <property type="gene ID" value="TraesSYM7D03G04509730"/>
</dbReference>
<dbReference type="Gramene" id="TraesSYM7D03G04514440.1">
    <property type="protein sequence ID" value="TraesSYM7D03G04514440.1.CDS1"/>
    <property type="gene ID" value="TraesSYM7D03G04514440"/>
</dbReference>
<dbReference type="Gramene" id="TraesSYM7D03G04514900.1">
    <property type="protein sequence ID" value="TraesSYM7D03G04514900.1.CDS1"/>
    <property type="gene ID" value="TraesSYM7D03G04514900"/>
</dbReference>
<dbReference type="Gramene" id="TraesWEE_scaffold_049341_01G000300.1">
    <property type="protein sequence ID" value="TraesWEE_scaffold_049341_01G000300.1"/>
    <property type="gene ID" value="TraesWEE_scaffold_049341_01G000300"/>
</dbReference>
<dbReference type="eggNOG" id="KOG0004">
    <property type="taxonomic scope" value="Eukaryota"/>
</dbReference>
<dbReference type="OrthoDB" id="1846915at2759"/>
<dbReference type="Proteomes" id="UP000019116">
    <property type="component" value="Chromosome 7D"/>
</dbReference>
<dbReference type="ExpressionAtlas" id="P69326">
    <property type="expression patterns" value="baseline"/>
</dbReference>
<dbReference type="GO" id="GO:0005737">
    <property type="term" value="C:cytoplasm"/>
    <property type="evidence" value="ECO:0007669"/>
    <property type="project" value="UniProtKB-SubCell"/>
</dbReference>
<dbReference type="GO" id="GO:0005634">
    <property type="term" value="C:nucleus"/>
    <property type="evidence" value="ECO:0007669"/>
    <property type="project" value="UniProtKB-SubCell"/>
</dbReference>
<dbReference type="GO" id="GO:0003729">
    <property type="term" value="F:mRNA binding"/>
    <property type="evidence" value="ECO:0007669"/>
    <property type="project" value="UniProtKB-ARBA"/>
</dbReference>
<dbReference type="CDD" id="cd01803">
    <property type="entry name" value="Ubl_ubiquitin"/>
    <property type="match status" value="1"/>
</dbReference>
<dbReference type="FunFam" id="3.10.20.90:FF:000016">
    <property type="entry name" value="Polyubiquitin 3"/>
    <property type="match status" value="1"/>
</dbReference>
<dbReference type="Gene3D" id="3.10.20.90">
    <property type="entry name" value="Phosphatidylinositol 3-kinase Catalytic Subunit, Chain A, domain 1"/>
    <property type="match status" value="1"/>
</dbReference>
<dbReference type="InterPro" id="IPR000626">
    <property type="entry name" value="Ubiquitin-like_dom"/>
</dbReference>
<dbReference type="InterPro" id="IPR029071">
    <property type="entry name" value="Ubiquitin-like_domsf"/>
</dbReference>
<dbReference type="InterPro" id="IPR019954">
    <property type="entry name" value="Ubiquitin_CS"/>
</dbReference>
<dbReference type="InterPro" id="IPR019956">
    <property type="entry name" value="Ubiquitin_dom"/>
</dbReference>
<dbReference type="InterPro" id="IPR050158">
    <property type="entry name" value="Ubiquitin_ubiquitin-like"/>
</dbReference>
<dbReference type="PANTHER" id="PTHR10666">
    <property type="entry name" value="UBIQUITIN"/>
    <property type="match status" value="1"/>
</dbReference>
<dbReference type="Pfam" id="PF00240">
    <property type="entry name" value="ubiquitin"/>
    <property type="match status" value="1"/>
</dbReference>
<dbReference type="PRINTS" id="PR00348">
    <property type="entry name" value="UBIQUITIN"/>
</dbReference>
<dbReference type="SMART" id="SM00213">
    <property type="entry name" value="UBQ"/>
    <property type="match status" value="1"/>
</dbReference>
<dbReference type="SUPFAM" id="SSF54236">
    <property type="entry name" value="Ubiquitin-like"/>
    <property type="match status" value="1"/>
</dbReference>
<dbReference type="PROSITE" id="PS00299">
    <property type="entry name" value="UBIQUITIN_1"/>
    <property type="match status" value="1"/>
</dbReference>
<dbReference type="PROSITE" id="PS50053">
    <property type="entry name" value="UBIQUITIN_2"/>
    <property type="match status" value="1"/>
</dbReference>
<feature type="chain" id="PRO_0000114853" description="Ubiquitin">
    <location>
        <begin position="1"/>
        <end position="76"/>
    </location>
</feature>
<feature type="propeptide" id="PRO_0000396431">
    <location>
        <position position="77"/>
    </location>
</feature>
<feature type="domain" description="Ubiquitin-like" evidence="2">
    <location>
        <begin position="1"/>
        <end position="76"/>
    </location>
</feature>
<feature type="cross-link" description="Glycyl lysine isopeptide (Lys-Gly) (interchain with G-Cter in ubiquitin)" evidence="1">
    <location>
        <position position="48"/>
    </location>
</feature>
<feature type="cross-link" description="Glycyl lysine isopeptide (Gly-Lys) (interchain with K-? in acceptor proteins)" evidence="2">
    <location>
        <position position="76"/>
    </location>
</feature>
<feature type="strand" evidence="5">
    <location>
        <begin position="1"/>
        <end position="7"/>
    </location>
</feature>
<feature type="strand" evidence="7">
    <location>
        <begin position="8"/>
        <end position="10"/>
    </location>
</feature>
<feature type="strand" evidence="5">
    <location>
        <begin position="12"/>
        <end position="18"/>
    </location>
</feature>
<feature type="helix" evidence="5">
    <location>
        <begin position="23"/>
        <end position="34"/>
    </location>
</feature>
<feature type="helix" evidence="5">
    <location>
        <begin position="38"/>
        <end position="40"/>
    </location>
</feature>
<feature type="strand" evidence="5">
    <location>
        <begin position="42"/>
        <end position="45"/>
    </location>
</feature>
<feature type="strand" evidence="5">
    <location>
        <begin position="47"/>
        <end position="49"/>
    </location>
</feature>
<feature type="strand" evidence="6">
    <location>
        <begin position="54"/>
        <end position="56"/>
    </location>
</feature>
<feature type="helix" evidence="5">
    <location>
        <begin position="57"/>
        <end position="59"/>
    </location>
</feature>
<feature type="strand" evidence="5">
    <location>
        <begin position="66"/>
        <end position="70"/>
    </location>
</feature>
<accession>P69326</accession>
<accession>O82079</accession>
<accession>P03993</accession>
<name>UBIQ_WHEAT</name>
<reference key="1">
    <citation type="journal article" date="1991" name="Plant Mol. Biol.">
        <title>Wheat ubiquitin gene exhibits a conserved protein coding region and a diverged 3' non-coding region.</title>
        <authorList>
            <person name="Joshi C.P."/>
            <person name="Weng J."/>
            <person name="Nguyen H.T."/>
        </authorList>
    </citation>
    <scope>NUCLEOTIDE SEQUENCE [MRNA]</scope>
    <source>
        <strain>cv. Mustang</strain>
        <tissue>Leaf</tissue>
    </source>
</reference>
<reference evidence="4" key="2">
    <citation type="journal article" date="2022" name="Nat. Commun.">
        <title>Crystal structures reveal catalytic and regulatory mechanisms of the dual-specificity ubiquitin/FAT10 E1 enzyme Uba6.</title>
        <authorList>
            <person name="Yuan L."/>
            <person name="Gao F."/>
            <person name="Lv Z."/>
            <person name="Nayak D."/>
            <person name="Nayak A."/>
            <person name="Santos Bury P.D."/>
            <person name="Cano K.E."/>
            <person name="Jia L."/>
            <person name="Oleinik N."/>
            <person name="Atilgan F.C."/>
            <person name="Ogretmen B."/>
            <person name="Williams K.M."/>
            <person name="Davies C."/>
            <person name="El Oualid F."/>
            <person name="Wasmuth E.V."/>
            <person name="Olsen S.K."/>
        </authorList>
    </citation>
    <scope>X-RAY CRYSTALLOGRAPHY (2.25 ANGSTROMS) OF 1-76 OF MUTANT ARG-6; ARG-11; ARG-27; ARG-29; ARG-33; ARG-48 AND ARG-63 IN COMPLEX WITH AMP AND HUMAN UBA6</scope>
</reference>